<keyword id="KW-0963">Cytoplasm</keyword>
<keyword id="KW-0448">Lipopolysaccharide biosynthesis</keyword>
<keyword id="KW-0808">Transferase</keyword>
<protein>
    <recommendedName>
        <fullName evidence="1">2-dehydro-3-deoxyphosphooctonate aldolase</fullName>
        <ecNumber evidence="1">2.5.1.55</ecNumber>
    </recommendedName>
    <alternativeName>
        <fullName evidence="1">3-deoxy-D-manno-octulosonic acid 8-phosphate synthase</fullName>
    </alternativeName>
    <alternativeName>
        <fullName evidence="1">KDO-8-phosphate synthase</fullName>
        <shortName evidence="1">KDO 8-P synthase</shortName>
        <shortName evidence="1">KDOPS</shortName>
    </alternativeName>
    <alternativeName>
        <fullName evidence="1">Phospho-2-dehydro-3-deoxyoctonate aldolase</fullName>
    </alternativeName>
</protein>
<evidence type="ECO:0000255" key="1">
    <source>
        <dbReference type="HAMAP-Rule" id="MF_00056"/>
    </source>
</evidence>
<dbReference type="EC" id="2.5.1.55" evidence="1"/>
<dbReference type="EMBL" id="CP000469">
    <property type="protein sequence ID" value="ABK47013.1"/>
    <property type="molecule type" value="Genomic_DNA"/>
</dbReference>
<dbReference type="RefSeq" id="WP_011625269.1">
    <property type="nucleotide sequence ID" value="NC_008577.1"/>
</dbReference>
<dbReference type="SMR" id="A0KT94"/>
<dbReference type="STRING" id="94122.Shewana3_0775"/>
<dbReference type="GeneID" id="94726759"/>
<dbReference type="KEGG" id="shn:Shewana3_0775"/>
<dbReference type="eggNOG" id="COG2877">
    <property type="taxonomic scope" value="Bacteria"/>
</dbReference>
<dbReference type="HOGENOM" id="CLU_036666_0_0_6"/>
<dbReference type="OrthoDB" id="9776934at2"/>
<dbReference type="UniPathway" id="UPA00030"/>
<dbReference type="UniPathway" id="UPA00357">
    <property type="reaction ID" value="UER00474"/>
</dbReference>
<dbReference type="Proteomes" id="UP000002589">
    <property type="component" value="Chromosome"/>
</dbReference>
<dbReference type="GO" id="GO:0005737">
    <property type="term" value="C:cytoplasm"/>
    <property type="evidence" value="ECO:0007669"/>
    <property type="project" value="UniProtKB-SubCell"/>
</dbReference>
<dbReference type="GO" id="GO:0008676">
    <property type="term" value="F:3-deoxy-8-phosphooctulonate synthase activity"/>
    <property type="evidence" value="ECO:0007669"/>
    <property type="project" value="UniProtKB-UniRule"/>
</dbReference>
<dbReference type="GO" id="GO:0019294">
    <property type="term" value="P:keto-3-deoxy-D-manno-octulosonic acid biosynthetic process"/>
    <property type="evidence" value="ECO:0007669"/>
    <property type="project" value="UniProtKB-UniRule"/>
</dbReference>
<dbReference type="Gene3D" id="3.20.20.70">
    <property type="entry name" value="Aldolase class I"/>
    <property type="match status" value="1"/>
</dbReference>
<dbReference type="HAMAP" id="MF_00056">
    <property type="entry name" value="KDO8P_synth"/>
    <property type="match status" value="1"/>
</dbReference>
<dbReference type="InterPro" id="IPR013785">
    <property type="entry name" value="Aldolase_TIM"/>
</dbReference>
<dbReference type="InterPro" id="IPR006218">
    <property type="entry name" value="DAHP1/KDSA"/>
</dbReference>
<dbReference type="InterPro" id="IPR006269">
    <property type="entry name" value="KDO8P_synthase"/>
</dbReference>
<dbReference type="NCBIfam" id="TIGR01362">
    <property type="entry name" value="KDO8P_synth"/>
    <property type="match status" value="1"/>
</dbReference>
<dbReference type="NCBIfam" id="NF003543">
    <property type="entry name" value="PRK05198.1"/>
    <property type="match status" value="1"/>
</dbReference>
<dbReference type="NCBIfam" id="NF009109">
    <property type="entry name" value="PRK12457.1"/>
    <property type="match status" value="1"/>
</dbReference>
<dbReference type="PANTHER" id="PTHR21057">
    <property type="entry name" value="PHOSPHO-2-DEHYDRO-3-DEOXYHEPTONATE ALDOLASE"/>
    <property type="match status" value="1"/>
</dbReference>
<dbReference type="Pfam" id="PF00793">
    <property type="entry name" value="DAHP_synth_1"/>
    <property type="match status" value="1"/>
</dbReference>
<dbReference type="SUPFAM" id="SSF51569">
    <property type="entry name" value="Aldolase"/>
    <property type="match status" value="1"/>
</dbReference>
<feature type="chain" id="PRO_0000304487" description="2-dehydro-3-deoxyphosphooctonate aldolase">
    <location>
        <begin position="1"/>
        <end position="282"/>
    </location>
</feature>
<proteinExistence type="inferred from homology"/>
<comment type="catalytic activity">
    <reaction evidence="1">
        <text>D-arabinose 5-phosphate + phosphoenolpyruvate + H2O = 3-deoxy-alpha-D-manno-2-octulosonate-8-phosphate + phosphate</text>
        <dbReference type="Rhea" id="RHEA:14053"/>
        <dbReference type="ChEBI" id="CHEBI:15377"/>
        <dbReference type="ChEBI" id="CHEBI:43474"/>
        <dbReference type="ChEBI" id="CHEBI:57693"/>
        <dbReference type="ChEBI" id="CHEBI:58702"/>
        <dbReference type="ChEBI" id="CHEBI:85985"/>
        <dbReference type="EC" id="2.5.1.55"/>
    </reaction>
</comment>
<comment type="pathway">
    <text evidence="1">Carbohydrate biosynthesis; 3-deoxy-D-manno-octulosonate biosynthesis; 3-deoxy-D-manno-octulosonate from D-ribulose 5-phosphate: step 2/3.</text>
</comment>
<comment type="pathway">
    <text evidence="1">Bacterial outer membrane biogenesis; lipopolysaccharide biosynthesis.</text>
</comment>
<comment type="subcellular location">
    <subcellularLocation>
        <location evidence="1">Cytoplasm</location>
    </subcellularLocation>
</comment>
<comment type="similarity">
    <text evidence="1">Belongs to the KdsA family.</text>
</comment>
<reference key="1">
    <citation type="submission" date="2006-09" db="EMBL/GenBank/DDBJ databases">
        <title>Complete sequence of chromosome 1 of Shewanella sp. ANA-3.</title>
        <authorList>
            <person name="Copeland A."/>
            <person name="Lucas S."/>
            <person name="Lapidus A."/>
            <person name="Barry K."/>
            <person name="Detter J.C."/>
            <person name="Glavina del Rio T."/>
            <person name="Hammon N."/>
            <person name="Israni S."/>
            <person name="Dalin E."/>
            <person name="Tice H."/>
            <person name="Pitluck S."/>
            <person name="Chertkov O."/>
            <person name="Brettin T."/>
            <person name="Bruce D."/>
            <person name="Han C."/>
            <person name="Tapia R."/>
            <person name="Gilna P."/>
            <person name="Schmutz J."/>
            <person name="Larimer F."/>
            <person name="Land M."/>
            <person name="Hauser L."/>
            <person name="Kyrpides N."/>
            <person name="Kim E."/>
            <person name="Newman D."/>
            <person name="Salticov C."/>
            <person name="Konstantinidis K."/>
            <person name="Klappenback J."/>
            <person name="Tiedje J."/>
            <person name="Richardson P."/>
        </authorList>
    </citation>
    <scope>NUCLEOTIDE SEQUENCE [LARGE SCALE GENOMIC DNA]</scope>
    <source>
        <strain>ANA-3</strain>
    </source>
</reference>
<accession>A0KT94</accession>
<sequence>MSNKIINLGSIEIANDKPFVLFGGMNVLESRDLAMSIAETYAEVTQKLGIPYVFKASFDKANRSSVNSYRGPGMEEGLKIFEEIKKTFNLPLITDVHETYQCAPVAEVVDIIQLPAFLARQTDLVVAMAKTGAIINVKKPQFLAPHEMRHIITKFNEAGNDEIILCERGSCFGYNNLVVDMLGMDEMKQSGYPVIFDATHALQRPGGRADSAGGRRAQATELARSGMALGLAGLFIEAHPDPDNAKCDGPCALPLHQLENYLKQMKAIDDLVKSFDPIDTSK</sequence>
<gene>
    <name evidence="1" type="primary">kdsA</name>
    <name type="ordered locus">Shewana3_0775</name>
</gene>
<organism>
    <name type="scientific">Shewanella sp. (strain ANA-3)</name>
    <dbReference type="NCBI Taxonomy" id="94122"/>
    <lineage>
        <taxon>Bacteria</taxon>
        <taxon>Pseudomonadati</taxon>
        <taxon>Pseudomonadota</taxon>
        <taxon>Gammaproteobacteria</taxon>
        <taxon>Alteromonadales</taxon>
        <taxon>Shewanellaceae</taxon>
        <taxon>Shewanella</taxon>
    </lineage>
</organism>
<name>KDSA_SHESA</name>